<proteinExistence type="inferred from homology"/>
<name>NADE_SHEB2</name>
<gene>
    <name evidence="1" type="primary">nadE</name>
    <name type="ordered locus">Sbal223_1803</name>
</gene>
<feature type="chain" id="PRO_1000191506" description="NH(3)-dependent NAD(+) synthetase">
    <location>
        <begin position="1"/>
        <end position="276"/>
    </location>
</feature>
<feature type="binding site" evidence="1">
    <location>
        <begin position="43"/>
        <end position="50"/>
    </location>
    <ligand>
        <name>ATP</name>
        <dbReference type="ChEBI" id="CHEBI:30616"/>
    </ligand>
</feature>
<feature type="binding site" evidence="1">
    <location>
        <position position="49"/>
    </location>
    <ligand>
        <name>Mg(2+)</name>
        <dbReference type="ChEBI" id="CHEBI:18420"/>
    </ligand>
</feature>
<feature type="binding site" evidence="1">
    <location>
        <position position="146"/>
    </location>
    <ligand>
        <name>deamido-NAD(+)</name>
        <dbReference type="ChEBI" id="CHEBI:58437"/>
    </ligand>
</feature>
<feature type="binding site" evidence="1">
    <location>
        <position position="166"/>
    </location>
    <ligand>
        <name>ATP</name>
        <dbReference type="ChEBI" id="CHEBI:30616"/>
    </ligand>
</feature>
<feature type="binding site" evidence="1">
    <location>
        <position position="171"/>
    </location>
    <ligand>
        <name>Mg(2+)</name>
        <dbReference type="ChEBI" id="CHEBI:18420"/>
    </ligand>
</feature>
<feature type="binding site" evidence="1">
    <location>
        <position position="179"/>
    </location>
    <ligand>
        <name>deamido-NAD(+)</name>
        <dbReference type="ChEBI" id="CHEBI:58437"/>
    </ligand>
</feature>
<feature type="binding site" evidence="1">
    <location>
        <position position="186"/>
    </location>
    <ligand>
        <name>deamido-NAD(+)</name>
        <dbReference type="ChEBI" id="CHEBI:58437"/>
    </ligand>
</feature>
<feature type="binding site" evidence="1">
    <location>
        <position position="195"/>
    </location>
    <ligand>
        <name>ATP</name>
        <dbReference type="ChEBI" id="CHEBI:30616"/>
    </ligand>
</feature>
<feature type="binding site" evidence="1">
    <location>
        <position position="217"/>
    </location>
    <ligand>
        <name>ATP</name>
        <dbReference type="ChEBI" id="CHEBI:30616"/>
    </ligand>
</feature>
<feature type="binding site" evidence="1">
    <location>
        <begin position="266"/>
        <end position="267"/>
    </location>
    <ligand>
        <name>deamido-NAD(+)</name>
        <dbReference type="ChEBI" id="CHEBI:58437"/>
    </ligand>
</feature>
<organism>
    <name type="scientific">Shewanella baltica (strain OS223)</name>
    <dbReference type="NCBI Taxonomy" id="407976"/>
    <lineage>
        <taxon>Bacteria</taxon>
        <taxon>Pseudomonadati</taxon>
        <taxon>Pseudomonadota</taxon>
        <taxon>Gammaproteobacteria</taxon>
        <taxon>Alteromonadales</taxon>
        <taxon>Shewanellaceae</taxon>
        <taxon>Shewanella</taxon>
    </lineage>
</organism>
<dbReference type="EC" id="6.3.1.5" evidence="1"/>
<dbReference type="EMBL" id="CP001252">
    <property type="protein sequence ID" value="ACK46308.1"/>
    <property type="molecule type" value="Genomic_DNA"/>
</dbReference>
<dbReference type="RefSeq" id="WP_006086216.1">
    <property type="nucleotide sequence ID" value="NC_011663.1"/>
</dbReference>
<dbReference type="SMR" id="B8E735"/>
<dbReference type="GeneID" id="11772748"/>
<dbReference type="KEGG" id="sbp:Sbal223_1803"/>
<dbReference type="HOGENOM" id="CLU_059327_3_0_6"/>
<dbReference type="UniPathway" id="UPA00253">
    <property type="reaction ID" value="UER00333"/>
</dbReference>
<dbReference type="Proteomes" id="UP000002507">
    <property type="component" value="Chromosome"/>
</dbReference>
<dbReference type="GO" id="GO:0005737">
    <property type="term" value="C:cytoplasm"/>
    <property type="evidence" value="ECO:0007669"/>
    <property type="project" value="InterPro"/>
</dbReference>
<dbReference type="GO" id="GO:0005524">
    <property type="term" value="F:ATP binding"/>
    <property type="evidence" value="ECO:0007669"/>
    <property type="project" value="UniProtKB-UniRule"/>
</dbReference>
<dbReference type="GO" id="GO:0004359">
    <property type="term" value="F:glutaminase activity"/>
    <property type="evidence" value="ECO:0007669"/>
    <property type="project" value="InterPro"/>
</dbReference>
<dbReference type="GO" id="GO:0046872">
    <property type="term" value="F:metal ion binding"/>
    <property type="evidence" value="ECO:0007669"/>
    <property type="project" value="UniProtKB-KW"/>
</dbReference>
<dbReference type="GO" id="GO:0003952">
    <property type="term" value="F:NAD+ synthase (glutamine-hydrolyzing) activity"/>
    <property type="evidence" value="ECO:0007669"/>
    <property type="project" value="InterPro"/>
</dbReference>
<dbReference type="GO" id="GO:0008795">
    <property type="term" value="F:NAD+ synthase activity"/>
    <property type="evidence" value="ECO:0007669"/>
    <property type="project" value="UniProtKB-UniRule"/>
</dbReference>
<dbReference type="GO" id="GO:0009435">
    <property type="term" value="P:NAD biosynthetic process"/>
    <property type="evidence" value="ECO:0007669"/>
    <property type="project" value="UniProtKB-UniRule"/>
</dbReference>
<dbReference type="CDD" id="cd00553">
    <property type="entry name" value="NAD_synthase"/>
    <property type="match status" value="1"/>
</dbReference>
<dbReference type="FunFam" id="3.40.50.620:FF:000015">
    <property type="entry name" value="NH(3)-dependent NAD(+) synthetase"/>
    <property type="match status" value="1"/>
</dbReference>
<dbReference type="Gene3D" id="3.40.50.620">
    <property type="entry name" value="HUPs"/>
    <property type="match status" value="1"/>
</dbReference>
<dbReference type="HAMAP" id="MF_00193">
    <property type="entry name" value="NadE_ammonia_dep"/>
    <property type="match status" value="1"/>
</dbReference>
<dbReference type="InterPro" id="IPR022310">
    <property type="entry name" value="NAD/GMP_synthase"/>
</dbReference>
<dbReference type="InterPro" id="IPR003694">
    <property type="entry name" value="NAD_synthase"/>
</dbReference>
<dbReference type="InterPro" id="IPR022926">
    <property type="entry name" value="NH(3)-dep_NAD(+)_synth"/>
</dbReference>
<dbReference type="InterPro" id="IPR014729">
    <property type="entry name" value="Rossmann-like_a/b/a_fold"/>
</dbReference>
<dbReference type="NCBIfam" id="TIGR00552">
    <property type="entry name" value="nadE"/>
    <property type="match status" value="1"/>
</dbReference>
<dbReference type="NCBIfam" id="NF001979">
    <property type="entry name" value="PRK00768.1"/>
    <property type="match status" value="1"/>
</dbReference>
<dbReference type="PANTHER" id="PTHR23090">
    <property type="entry name" value="NH 3 /GLUTAMINE-DEPENDENT NAD + SYNTHETASE"/>
    <property type="match status" value="1"/>
</dbReference>
<dbReference type="PANTHER" id="PTHR23090:SF7">
    <property type="entry name" value="NH(3)-DEPENDENT NAD(+) SYNTHETASE"/>
    <property type="match status" value="1"/>
</dbReference>
<dbReference type="Pfam" id="PF02540">
    <property type="entry name" value="NAD_synthase"/>
    <property type="match status" value="1"/>
</dbReference>
<dbReference type="SUPFAM" id="SSF52402">
    <property type="entry name" value="Adenine nucleotide alpha hydrolases-like"/>
    <property type="match status" value="1"/>
</dbReference>
<reference key="1">
    <citation type="submission" date="2008-12" db="EMBL/GenBank/DDBJ databases">
        <title>Complete sequence of chromosome of Shewanella baltica OS223.</title>
        <authorList>
            <consortium name="US DOE Joint Genome Institute"/>
            <person name="Lucas S."/>
            <person name="Copeland A."/>
            <person name="Lapidus A."/>
            <person name="Glavina del Rio T."/>
            <person name="Dalin E."/>
            <person name="Tice H."/>
            <person name="Bruce D."/>
            <person name="Goodwin L."/>
            <person name="Pitluck S."/>
            <person name="Chertkov O."/>
            <person name="Meincke L."/>
            <person name="Brettin T."/>
            <person name="Detter J.C."/>
            <person name="Han C."/>
            <person name="Kuske C.R."/>
            <person name="Larimer F."/>
            <person name="Land M."/>
            <person name="Hauser L."/>
            <person name="Kyrpides N."/>
            <person name="Ovchinnikova G."/>
            <person name="Brettar I."/>
            <person name="Rodrigues J."/>
            <person name="Konstantinidis K."/>
            <person name="Tiedje J."/>
        </authorList>
    </citation>
    <scope>NUCLEOTIDE SEQUENCE [LARGE SCALE GENOMIC DNA]</scope>
    <source>
        <strain>OS223</strain>
    </source>
</reference>
<evidence type="ECO:0000255" key="1">
    <source>
        <dbReference type="HAMAP-Rule" id="MF_00193"/>
    </source>
</evidence>
<accession>B8E735</accession>
<keyword id="KW-0067">ATP-binding</keyword>
<keyword id="KW-0436">Ligase</keyword>
<keyword id="KW-0460">Magnesium</keyword>
<keyword id="KW-0479">Metal-binding</keyword>
<keyword id="KW-0520">NAD</keyword>
<keyword id="KW-0547">Nucleotide-binding</keyword>
<protein>
    <recommendedName>
        <fullName evidence="1">NH(3)-dependent NAD(+) synthetase</fullName>
        <ecNumber evidence="1">6.3.1.5</ecNumber>
    </recommendedName>
</protein>
<sequence>MKAQILREMKVLTAIEPEFEVQRRVAFIKTKLKEARSKALVLGISGGVDSSTAGRLCQLAVDSLNHENSQGGYQFIAVRLPYQIQKDEHEAQLACQFIQPSKLVTVNVHQGVDGVHSATVAALAEAGLPLPDVAKVDFVKGNVKARMRMIAQYELAGLVGGLVVGTDHSAENITGFYTKWGDGACDLAPLFGLNKRQVRQLAAYLGAPESLVHKAPTADLEDNKPLLEDEVALGLTYAQIDDFLEGKDVGKAVEDKLIGIYKATQHKRQPIPTIYD</sequence>
<comment type="function">
    <text evidence="1">Catalyzes the ATP-dependent amidation of deamido-NAD to form NAD. Uses ammonia as a nitrogen source.</text>
</comment>
<comment type="catalytic activity">
    <reaction evidence="1">
        <text>deamido-NAD(+) + NH4(+) + ATP = AMP + diphosphate + NAD(+) + H(+)</text>
        <dbReference type="Rhea" id="RHEA:21188"/>
        <dbReference type="ChEBI" id="CHEBI:15378"/>
        <dbReference type="ChEBI" id="CHEBI:28938"/>
        <dbReference type="ChEBI" id="CHEBI:30616"/>
        <dbReference type="ChEBI" id="CHEBI:33019"/>
        <dbReference type="ChEBI" id="CHEBI:57540"/>
        <dbReference type="ChEBI" id="CHEBI:58437"/>
        <dbReference type="ChEBI" id="CHEBI:456215"/>
        <dbReference type="EC" id="6.3.1.5"/>
    </reaction>
</comment>
<comment type="pathway">
    <text evidence="1">Cofactor biosynthesis; NAD(+) biosynthesis; NAD(+) from deamido-NAD(+) (ammonia route): step 1/1.</text>
</comment>
<comment type="subunit">
    <text evidence="1">Homodimer.</text>
</comment>
<comment type="similarity">
    <text evidence="1">Belongs to the NAD synthetase family.</text>
</comment>